<reference key="1">
    <citation type="journal article" date="1991" name="J. Biol. Chem.">
        <title>Fructose catabolism in Xanthomonas campestris pv. campestris. Sequence of the PTS operon, characterization of the fructose-specific enzymes.</title>
        <authorList>
            <person name="de Crecy-Lagard V."/>
            <person name="Bouvet O.M."/>
            <person name="Lejeune P."/>
            <person name="Danchin A."/>
        </authorList>
    </citation>
    <scope>NUCLEOTIDE SEQUENCE [GENOMIC DNA]</scope>
    <scope>FUNCTION</scope>
    <scope>CATALYTIC ACTIVITY</scope>
    <scope>INDUCTION</scope>
    <source>
        <strain>ATCC 13951 / NCIB 11803 / NRRL B-1459</strain>
    </source>
</reference>
<reference key="2">
    <citation type="journal article" date="2002" name="Nature">
        <title>Comparison of the genomes of two Xanthomonas pathogens with differing host specificities.</title>
        <authorList>
            <person name="da Silva A.C.R."/>
            <person name="Ferro J.A."/>
            <person name="Reinach F.C."/>
            <person name="Farah C.S."/>
            <person name="Furlan L.R."/>
            <person name="Quaggio R.B."/>
            <person name="Monteiro-Vitorello C.B."/>
            <person name="Van Sluys M.A."/>
            <person name="Almeida N.F. Jr."/>
            <person name="Alves L.M.C."/>
            <person name="do Amaral A.M."/>
            <person name="Bertolini M.C."/>
            <person name="Camargo L.E.A."/>
            <person name="Camarotte G."/>
            <person name="Cannavan F."/>
            <person name="Cardozo J."/>
            <person name="Chambergo F."/>
            <person name="Ciapina L.P."/>
            <person name="Cicarelli R.M.B."/>
            <person name="Coutinho L.L."/>
            <person name="Cursino-Santos J.R."/>
            <person name="El-Dorry H."/>
            <person name="Faria J.B."/>
            <person name="Ferreira A.J.S."/>
            <person name="Ferreira R.C.C."/>
            <person name="Ferro M.I.T."/>
            <person name="Formighieri E.F."/>
            <person name="Franco M.C."/>
            <person name="Greggio C.C."/>
            <person name="Gruber A."/>
            <person name="Katsuyama A.M."/>
            <person name="Kishi L.T."/>
            <person name="Leite R.P."/>
            <person name="Lemos E.G.M."/>
            <person name="Lemos M.V.F."/>
            <person name="Locali E.C."/>
            <person name="Machado M.A."/>
            <person name="Madeira A.M.B.N."/>
            <person name="Martinez-Rossi N.M."/>
            <person name="Martins E.C."/>
            <person name="Meidanis J."/>
            <person name="Menck C.F.M."/>
            <person name="Miyaki C.Y."/>
            <person name="Moon D.H."/>
            <person name="Moreira L.M."/>
            <person name="Novo M.T.M."/>
            <person name="Okura V.K."/>
            <person name="Oliveira M.C."/>
            <person name="Oliveira V.R."/>
            <person name="Pereira H.A."/>
            <person name="Rossi A."/>
            <person name="Sena J.A.D."/>
            <person name="Silva C."/>
            <person name="de Souza R.F."/>
            <person name="Spinola L.A.F."/>
            <person name="Takita M.A."/>
            <person name="Tamura R.E."/>
            <person name="Teixeira E.C."/>
            <person name="Tezza R.I.D."/>
            <person name="Trindade dos Santos M."/>
            <person name="Truffi D."/>
            <person name="Tsai S.M."/>
            <person name="White F.F."/>
            <person name="Setubal J.C."/>
            <person name="Kitajima J.P."/>
        </authorList>
    </citation>
    <scope>NUCLEOTIDE SEQUENCE [LARGE SCALE GENOMIC DNA]</scope>
    <source>
        <strain>ATCC 33913 / DSM 3586 / NCPPB 528 / LMG 568 / P 25</strain>
    </source>
</reference>
<dbReference type="EC" id="2.7.1.56" evidence="3"/>
<dbReference type="EMBL" id="M69242">
    <property type="protein sequence ID" value="AAA27601.1"/>
    <property type="molecule type" value="Genomic_DNA"/>
</dbReference>
<dbReference type="EMBL" id="AE008922">
    <property type="protein sequence ID" value="AAM41649.1"/>
    <property type="molecule type" value="Genomic_DNA"/>
</dbReference>
<dbReference type="PIR" id="A40944">
    <property type="entry name" value="A40944"/>
</dbReference>
<dbReference type="RefSeq" id="NP_637725.1">
    <property type="nucleotide sequence ID" value="NC_003902.1"/>
</dbReference>
<dbReference type="SMR" id="P23354"/>
<dbReference type="STRING" id="190485.XCC2371"/>
<dbReference type="EnsemblBacteria" id="AAM41649">
    <property type="protein sequence ID" value="AAM41649"/>
    <property type="gene ID" value="XCC2371"/>
</dbReference>
<dbReference type="KEGG" id="xcc:XCC2371"/>
<dbReference type="PATRIC" id="fig|190485.4.peg.2525"/>
<dbReference type="eggNOG" id="COG1105">
    <property type="taxonomic scope" value="Bacteria"/>
</dbReference>
<dbReference type="HOGENOM" id="CLU_050013_0_1_6"/>
<dbReference type="OrthoDB" id="9801219at2"/>
<dbReference type="Proteomes" id="UP000001010">
    <property type="component" value="Chromosome"/>
</dbReference>
<dbReference type="GO" id="GO:0005829">
    <property type="term" value="C:cytosol"/>
    <property type="evidence" value="ECO:0000318"/>
    <property type="project" value="GO_Central"/>
</dbReference>
<dbReference type="GO" id="GO:0008662">
    <property type="term" value="F:1-phosphofructokinase activity"/>
    <property type="evidence" value="ECO:0007669"/>
    <property type="project" value="UniProtKB-EC"/>
</dbReference>
<dbReference type="GO" id="GO:0005524">
    <property type="term" value="F:ATP binding"/>
    <property type="evidence" value="ECO:0007669"/>
    <property type="project" value="UniProtKB-KW"/>
</dbReference>
<dbReference type="CDD" id="cd01164">
    <property type="entry name" value="FruK_PfkB_like"/>
    <property type="match status" value="1"/>
</dbReference>
<dbReference type="FunFam" id="3.40.1190.20:FF:000001">
    <property type="entry name" value="Phosphofructokinase"/>
    <property type="match status" value="1"/>
</dbReference>
<dbReference type="Gene3D" id="3.40.1190.20">
    <property type="match status" value="1"/>
</dbReference>
<dbReference type="InterPro" id="IPR022463">
    <property type="entry name" value="1-PFruKinase"/>
</dbReference>
<dbReference type="InterPro" id="IPR002173">
    <property type="entry name" value="Carboh/pur_kinase_PfkB_CS"/>
</dbReference>
<dbReference type="InterPro" id="IPR011611">
    <property type="entry name" value="PfkB_dom"/>
</dbReference>
<dbReference type="InterPro" id="IPR029056">
    <property type="entry name" value="Ribokinase-like"/>
</dbReference>
<dbReference type="InterPro" id="IPR017583">
    <property type="entry name" value="Tagatose/fructose_Pkinase"/>
</dbReference>
<dbReference type="NCBIfam" id="TIGR03168">
    <property type="entry name" value="1-PFK"/>
    <property type="match status" value="1"/>
</dbReference>
<dbReference type="NCBIfam" id="TIGR03828">
    <property type="entry name" value="pfkB"/>
    <property type="match status" value="1"/>
</dbReference>
<dbReference type="PANTHER" id="PTHR46566:SF5">
    <property type="entry name" value="1-PHOSPHOFRUCTOKINASE"/>
    <property type="match status" value="1"/>
</dbReference>
<dbReference type="PANTHER" id="PTHR46566">
    <property type="entry name" value="1-PHOSPHOFRUCTOKINASE-RELATED"/>
    <property type="match status" value="1"/>
</dbReference>
<dbReference type="Pfam" id="PF00294">
    <property type="entry name" value="PfkB"/>
    <property type="match status" value="1"/>
</dbReference>
<dbReference type="PIRSF" id="PIRSF000535">
    <property type="entry name" value="1PFK/6PFK/LacC"/>
    <property type="match status" value="1"/>
</dbReference>
<dbReference type="SUPFAM" id="SSF53613">
    <property type="entry name" value="Ribokinase-like"/>
    <property type="match status" value="1"/>
</dbReference>
<dbReference type="PROSITE" id="PS00583">
    <property type="entry name" value="PFKB_KINASES_1"/>
    <property type="match status" value="1"/>
</dbReference>
<dbReference type="PROSITE" id="PS00584">
    <property type="entry name" value="PFKB_KINASES_2"/>
    <property type="match status" value="1"/>
</dbReference>
<keyword id="KW-0067">ATP-binding</keyword>
<keyword id="KW-0418">Kinase</keyword>
<keyword id="KW-0547">Nucleotide-binding</keyword>
<keyword id="KW-1185">Reference proteome</keyword>
<keyword id="KW-0808">Transferase</keyword>
<evidence type="ECO:0000250" key="1">
    <source>
        <dbReference type="UniProtKB" id="P0A9J6"/>
    </source>
</evidence>
<evidence type="ECO:0000250" key="2">
    <source>
        <dbReference type="UniProtKB" id="P0AEW9"/>
    </source>
</evidence>
<evidence type="ECO:0000269" key="3">
    <source>
    </source>
</evidence>
<evidence type="ECO:0000303" key="4">
    <source>
    </source>
</evidence>
<evidence type="ECO:0000305" key="5"/>
<protein>
    <recommendedName>
        <fullName evidence="4">1-phosphofructokinase</fullName>
        <ecNumber evidence="3">2.7.1.56</ecNumber>
    </recommendedName>
    <alternativeName>
        <fullName evidence="4">Fructose 1-phosphate kinase</fullName>
        <shortName evidence="2">Fru1PK</shortName>
    </alternativeName>
</protein>
<sequence length="318" mass="32592">MSLQAITVTLNPAIDQTIQLDRLQPGAVHRASSVRNDAGGKGINVAACLADWGSQVAALGVLGVGNAGVFEALFRERGITDHCHRVAGDTRTNLKLVEAQVNETTDINLPGLQLGQAHLQGVADHLAPLLRAGLPVVLSGSLPAGLPEDSWAQLQAQASAAGARVLLDTSGAPLVAALAAAPVAMPYAVKPNRHELEAWTGHPLGDHAALTAAAHALIARGIQLVVISMGTEGALFVQRDQQLIARPPRLAQGSSVGAGDAMVAGLAAALLDDATELEQCARLATAFSMCRLESGDARRITPEGVRDAAAAVVIGAVP</sequence>
<accession>P23354</accession>
<proteinExistence type="evidence at protein level"/>
<gene>
    <name evidence="4" type="primary">fruK</name>
    <name type="ordered locus">XCC2371</name>
</gene>
<name>K1PF_XANCP</name>
<comment type="function">
    <text evidence="3">Catalyzes the ATP-dependent phosphorylation of fructose-l-phosphate to fructose-l,6-bisphosphate.</text>
</comment>
<comment type="catalytic activity">
    <reaction evidence="3">
        <text>beta-D-fructose 1-phosphate + ATP = beta-D-fructose 1,6-bisphosphate + ADP + H(+)</text>
        <dbReference type="Rhea" id="RHEA:14213"/>
        <dbReference type="ChEBI" id="CHEBI:15378"/>
        <dbReference type="ChEBI" id="CHEBI:30616"/>
        <dbReference type="ChEBI" id="CHEBI:32966"/>
        <dbReference type="ChEBI" id="CHEBI:138881"/>
        <dbReference type="ChEBI" id="CHEBI:456216"/>
        <dbReference type="EC" id="2.7.1.56"/>
    </reaction>
</comment>
<comment type="induction">
    <text evidence="3">Induced by fructose.</text>
</comment>
<comment type="similarity">
    <text evidence="5">Belongs to the carbohydrate kinase PfkB family.</text>
</comment>
<feature type="chain" id="PRO_0000080082" description="1-phosphofructokinase">
    <location>
        <begin position="1"/>
        <end position="318"/>
    </location>
</feature>
<feature type="active site" description="Proton acceptor" evidence="1">
    <location>
        <position position="260"/>
    </location>
</feature>
<feature type="binding site" evidence="1">
    <location>
        <begin position="228"/>
        <end position="233"/>
    </location>
    <ligand>
        <name>ATP</name>
        <dbReference type="ChEBI" id="CHEBI:30616"/>
    </ligand>
</feature>
<feature type="binding site" evidence="1">
    <location>
        <begin position="259"/>
        <end position="260"/>
    </location>
    <ligand>
        <name>ATP</name>
        <dbReference type="ChEBI" id="CHEBI:30616"/>
    </ligand>
</feature>
<feature type="sequence conflict" description="In Ref. 1; AAA27601." evidence="5" ref="1">
    <original>I</original>
    <variation>T</variation>
    <location>
        <position position="14"/>
    </location>
</feature>
<feature type="sequence conflict" description="In Ref. 1; AAA27601." evidence="5" ref="1">
    <original>TD</original>
    <variation>GN</variation>
    <location>
        <begin position="80"/>
        <end position="81"/>
    </location>
</feature>
<feature type="sequence conflict" description="In Ref. 1; AAA27601." evidence="5" ref="1">
    <original>ARVLLDTSGAPL</original>
    <variation>STRPARHQRCAA</variation>
    <location>
        <begin position="163"/>
        <end position="174"/>
    </location>
</feature>
<organism>
    <name type="scientific">Xanthomonas campestris pv. campestris (strain ATCC 33913 / DSM 3586 / NCPPB 528 / LMG 568 / P 25)</name>
    <dbReference type="NCBI Taxonomy" id="190485"/>
    <lineage>
        <taxon>Bacteria</taxon>
        <taxon>Pseudomonadati</taxon>
        <taxon>Pseudomonadota</taxon>
        <taxon>Gammaproteobacteria</taxon>
        <taxon>Lysobacterales</taxon>
        <taxon>Lysobacteraceae</taxon>
        <taxon>Xanthomonas</taxon>
    </lineage>
</organism>